<gene>
    <name evidence="9" type="primary">MAD1</name>
</gene>
<evidence type="ECO:0000250" key="1">
    <source>
        <dbReference type="UniProtKB" id="Q59UT4"/>
    </source>
</evidence>
<evidence type="ECO:0000250" key="2">
    <source>
        <dbReference type="UniProtKB" id="Q59UT5"/>
    </source>
</evidence>
<evidence type="ECO:0000255" key="3"/>
<evidence type="ECO:0000255" key="4">
    <source>
        <dbReference type="PROSITE-ProRule" id="PRU00498"/>
    </source>
</evidence>
<evidence type="ECO:0000255" key="5">
    <source>
        <dbReference type="PROSITE-ProRule" id="PRU01356"/>
    </source>
</evidence>
<evidence type="ECO:0000256" key="6">
    <source>
        <dbReference type="SAM" id="MobiDB-lite"/>
    </source>
</evidence>
<evidence type="ECO:0000269" key="7">
    <source>
    </source>
</evidence>
<evidence type="ECO:0000269" key="8">
    <source>
    </source>
</evidence>
<evidence type="ECO:0000303" key="9">
    <source>
    </source>
</evidence>
<evidence type="ECO:0000305" key="10"/>
<evidence type="ECO:0000305" key="11">
    <source>
    </source>
</evidence>
<evidence type="ECO:0000305" key="12">
    <source>
    </source>
</evidence>
<keyword id="KW-1003">Cell membrane</keyword>
<keyword id="KW-0134">Cell wall</keyword>
<keyword id="KW-1015">Disulfide bond</keyword>
<keyword id="KW-0325">Glycoprotein</keyword>
<keyword id="KW-0336">GPI-anchor</keyword>
<keyword id="KW-0449">Lipoprotein</keyword>
<keyword id="KW-0472">Membrane</keyword>
<keyword id="KW-0677">Repeat</keyword>
<keyword id="KW-0964">Secreted</keyword>
<keyword id="KW-0732">Signal</keyword>
<protein>
    <recommendedName>
        <fullName evidence="9">Adhesion cell surface protein MAD1</fullName>
    </recommendedName>
    <alternativeName>
        <fullName evidence="9">CFEM domain-containing cell surface protein MAD1</fullName>
    </alternativeName>
</protein>
<name>MAD1_METAN</name>
<dbReference type="EMBL" id="DQ338437">
    <property type="protein sequence ID" value="ABC65821.1"/>
    <property type="molecule type" value="mRNA"/>
</dbReference>
<dbReference type="VEuPathDB" id="FungiDB:MAN_02447"/>
<dbReference type="GO" id="GO:0005576">
    <property type="term" value="C:extracellular region"/>
    <property type="evidence" value="ECO:0007669"/>
    <property type="project" value="UniProtKB-KW"/>
</dbReference>
<dbReference type="GO" id="GO:0005886">
    <property type="term" value="C:plasma membrane"/>
    <property type="evidence" value="ECO:0007669"/>
    <property type="project" value="UniProtKB-SubCell"/>
</dbReference>
<dbReference type="GO" id="GO:0098552">
    <property type="term" value="C:side of membrane"/>
    <property type="evidence" value="ECO:0007669"/>
    <property type="project" value="UniProtKB-KW"/>
</dbReference>
<dbReference type="InterPro" id="IPR008427">
    <property type="entry name" value="Extracellular_membr_CFEM_dom"/>
</dbReference>
<dbReference type="PANTHER" id="PTHR39414:SF2">
    <property type="entry name" value="FLOCCULATION PROTEIN FLO11-LIKE"/>
    <property type="match status" value="1"/>
</dbReference>
<dbReference type="PANTHER" id="PTHR39414">
    <property type="entry name" value="SERINE/ARGININE REPETITIVE MATRIX PROTEIN 5-RELATED"/>
    <property type="match status" value="1"/>
</dbReference>
<dbReference type="Pfam" id="PF05730">
    <property type="entry name" value="CFEM"/>
    <property type="match status" value="1"/>
</dbReference>
<proteinExistence type="evidence at transcript level"/>
<organism>
    <name type="scientific">Metarhizium anisopliae</name>
    <name type="common">Entomophthora anisopliae</name>
    <dbReference type="NCBI Taxonomy" id="5530"/>
    <lineage>
        <taxon>Eukaryota</taxon>
        <taxon>Fungi</taxon>
        <taxon>Dikarya</taxon>
        <taxon>Ascomycota</taxon>
        <taxon>Pezizomycotina</taxon>
        <taxon>Sordariomycetes</taxon>
        <taxon>Hypocreomycetidae</taxon>
        <taxon>Hypocreales</taxon>
        <taxon>Clavicipitaceae</taxon>
        <taxon>Metarhizium</taxon>
    </lineage>
</organism>
<accession>Q2LC49</accession>
<sequence>MKSALSVVVAAAGVQQASATFGLLGGGGISFNFGLDWSGAKTFPCPGNVVNKCTPEQENGWDWSDVATGSLNTYAGFNFGGGWSCESNFGKRGDIQGRTFGLGKVISGSCDQGDEAGLSIGVGASAGIDAFSIDSFDMSTEFDARLEFHYDMPDGSVCKQTSDCKRGGSTIVNKQCGGAKKVRVIYPKQIIHKGISFSKKCKISCHKIKWHCGKPTPKPSTSVLTLPSTSTKVIQTTPVTTLQTYTTPSQQTTTPEKETTSSKETTTSAQQTTPGKETTPAQQTTPSKETTPVQQTTSGKETTPAQQTTPGKETTSSQETTSAHQTTPGKETTPAQQTTPGKETTPAQQTTPGKETTPAQQTTPGKETTPAQQTTPGQQTTPSQPTTAATTTPATTFVTTYDTTSTVYTTSTKTITSCGPEVTDCPGKTGPHIVTVTIPVSTTICPVTETRTQSQGVPTTVILPSKSETTVKEQPTPEQPTPEQPTGEKPNPVTSQPPQSTQTPPCPPVVPRCLNTFVDLKAKCADNKDASCFCPDKDFVKNIFDCIYAHGESDNIISEAISFFQGICGRYIPENPVIATGAETITQIITVTGTPHITQVPYTTVVVATTITENSSTQTISTEVTIPNIVMPTPTGGVPNQPPATASVPAGQNPPPVTGQNPPPAVTDQSPPPAITTGTGGVIPPKPTGSVPVTAGSGRVGAGLGMVLAVAAFVAAL</sequence>
<reference key="1">
    <citation type="journal article" date="2007" name="Eukaryot. Cell">
        <title>The MAD1 adhesin of Metarhizium anisopliae links adhesion with blastospore production and virulence to insects, and the MAD2 adhesin enables attachment to plants.</title>
        <authorList>
            <person name="Wang C."/>
            <person name="St Leger R.J."/>
        </authorList>
    </citation>
    <scope>NUCLEOTIDE SEQUENCE [MRNA]</scope>
    <scope>FUNCTION</scope>
    <scope>DOMAIN</scope>
    <scope>DISRUPTION PHENOTYPE</scope>
    <scope>INDUCTION</scope>
    <scope>SUBCELLULAR LOCATION</scope>
    <source>
        <strain>ARSEF2575</strain>
    </source>
</reference>
<reference key="2">
    <citation type="journal article" date="2005" name="Fungal Genet. Biol.">
        <title>Differential gene expression by Metarhizium anisopliae growing in root exudate and host (Manduca sexta) cuticle or hemolymph reveals mechanisms of physiological adaptation.</title>
        <authorList>
            <person name="Wang C."/>
            <person name="Hu G."/>
            <person name="St Leger R.J."/>
        </authorList>
    </citation>
    <scope>INDUCTION</scope>
</reference>
<feature type="signal peptide" evidence="3">
    <location>
        <begin position="1"/>
        <end position="19"/>
    </location>
</feature>
<feature type="chain" id="PRO_0000457852" description="Adhesion cell surface protein MAD1" evidence="3">
    <location>
        <begin position="20"/>
        <end position="695"/>
    </location>
</feature>
<feature type="propeptide" id="PRO_0000457853" description="Removed in mature form" evidence="3">
    <location>
        <begin position="696"/>
        <end position="717"/>
    </location>
</feature>
<feature type="repeat" description="1" evidence="12">
    <location>
        <begin position="275"/>
        <end position="286"/>
    </location>
</feature>
<feature type="repeat" description="2" evidence="12">
    <location>
        <begin position="287"/>
        <end position="298"/>
    </location>
</feature>
<feature type="repeat" description="3" evidence="12">
    <location>
        <begin position="299"/>
        <end position="310"/>
    </location>
</feature>
<feature type="repeat" description="4" evidence="12">
    <location>
        <begin position="311"/>
        <end position="328"/>
    </location>
</feature>
<feature type="repeat" description="5" evidence="12">
    <location>
        <begin position="329"/>
        <end position="340"/>
    </location>
</feature>
<feature type="repeat" description="6" evidence="12">
    <location>
        <begin position="341"/>
        <end position="352"/>
    </location>
</feature>
<feature type="repeat" description="7" evidence="12">
    <location>
        <begin position="353"/>
        <end position="364"/>
    </location>
</feature>
<feature type="repeat" description="8" evidence="12">
    <location>
        <begin position="365"/>
        <end position="376"/>
    </location>
</feature>
<feature type="domain" description="CFEM" evidence="5">
    <location>
        <begin position="481"/>
        <end position="595"/>
    </location>
</feature>
<feature type="region of interest" description="Disordered" evidence="6">
    <location>
        <begin position="237"/>
        <end position="392"/>
    </location>
</feature>
<feature type="region of interest" description="Disordered" evidence="6">
    <location>
        <begin position="451"/>
        <end position="506"/>
    </location>
</feature>
<feature type="region of interest" description="Disordered" evidence="6">
    <location>
        <begin position="632"/>
        <end position="690"/>
    </location>
</feature>
<feature type="compositionally biased region" description="Low complexity" evidence="6">
    <location>
        <begin position="237"/>
        <end position="254"/>
    </location>
</feature>
<feature type="compositionally biased region" description="Low complexity" evidence="6">
    <location>
        <begin position="262"/>
        <end position="274"/>
    </location>
</feature>
<feature type="compositionally biased region" description="Polar residues" evidence="6">
    <location>
        <begin position="275"/>
        <end position="366"/>
    </location>
</feature>
<feature type="compositionally biased region" description="Low complexity" evidence="6">
    <location>
        <begin position="368"/>
        <end position="392"/>
    </location>
</feature>
<feature type="compositionally biased region" description="Low complexity" evidence="6">
    <location>
        <begin position="484"/>
        <end position="503"/>
    </location>
</feature>
<feature type="compositionally biased region" description="Pro residues" evidence="6">
    <location>
        <begin position="652"/>
        <end position="674"/>
    </location>
</feature>
<feature type="binding site" description="axial binding residue" evidence="5">
    <location>
        <position position="529"/>
    </location>
    <ligand>
        <name>heme</name>
        <dbReference type="ChEBI" id="CHEBI:30413"/>
    </ligand>
    <ligandPart>
        <name>Fe</name>
        <dbReference type="ChEBI" id="CHEBI:18248"/>
    </ligandPart>
</feature>
<feature type="lipid moiety-binding region" description="GPI-anchor amidated alanine" evidence="3">
    <location>
        <position position="695"/>
    </location>
</feature>
<feature type="glycosylation site" description="N-linked (GlcNAc...) asparagine" evidence="4">
    <location>
        <position position="614"/>
    </location>
</feature>
<feature type="disulfide bond" evidence="5">
    <location>
        <begin position="513"/>
        <end position="546"/>
    </location>
</feature>
<feature type="disulfide bond" evidence="5">
    <location>
        <begin position="524"/>
        <end position="532"/>
    </location>
</feature>
<feature type="disulfide bond" evidence="5">
    <location>
        <begin position="534"/>
        <end position="568"/>
    </location>
</feature>
<comment type="function">
    <text evidence="8">Cell surface adhesion protein that plays a key role in virulence by allowing adherence to the insect host surface (PubMed:17337634). Required to orientate the cytoskeleton and stimulate the expression of genes involved in the cell cycle (PubMed:17337634). Is also involved in achieving the septin hourglass shape and subsequent separation of cells (PubMed:17337634).</text>
</comment>
<comment type="subcellular location">
    <subcellularLocation>
        <location evidence="8">Secreted</location>
        <location evidence="8">Cell wall</location>
    </subcellularLocation>
    <subcellularLocation>
        <location evidence="12">Cell membrane</location>
        <topology evidence="12">Lipid-anchor</topology>
        <topology evidence="12">GPI-anchor</topology>
    </subcellularLocation>
    <text evidence="1 8">Found anchored in the cell membrane as well as a covalently-linked GPI-modified cell wall protein (GPI-CWP) (By similarity). Heterogeneously and randomly distributed within the cell wall structure (PubMed:17337634).</text>
</comment>
<comment type="induction">
    <text evidence="7 8">Expression is up-regulated in nutrient-rich media and cell-free insect hemolymph.</text>
</comment>
<comment type="domain">
    <text evidence="2">The CFEM domain is involved in heme-binding. It contains 8 cysteines and is found in proteins from several pathogenic fungi, including both human and plant pathogens.</text>
</comment>
<comment type="domain">
    <text evidence="11">The tandem repeats might be heavily glycosylated to produce a rigid elongated structure that holds the adhesive N-terminal domain at the cell surface.</text>
</comment>
<comment type="PTM">
    <text evidence="2">The GPI-anchor is attached to the protein in the endoplasmic reticulum and serves to target the protein to the cell surface. There, the glucosamine-inositol phospholipid moiety is cleaved off and the GPI-modified mannoprotein is covalently attached via its lipidless GPI glycan remnant to the 1,6-beta-glucan of the outer cell wall layer.</text>
</comment>
<comment type="disruption phenotype">
    <text evidence="8">Blocks the adhesion of conidia to locust cuticle or fly wings (PubMed:17337634). Significantly reduces the virulence (PubMed:17337634). Delays spore germination and results in large multicellular hyphal bodies via interfering with the organization of the cytoskeleton (PubMed:17337634).</text>
</comment>
<comment type="similarity">
    <text evidence="10">Belongs to the RBT5 family.</text>
</comment>